<keyword id="KW-0002">3D-structure</keyword>
<keyword id="KW-0004">4Fe-4S</keyword>
<keyword id="KW-0148">Chlorophyll</keyword>
<keyword id="KW-0150">Chloroplast</keyword>
<keyword id="KW-0157">Chromophore</keyword>
<keyword id="KW-0249">Electron transport</keyword>
<keyword id="KW-0408">Iron</keyword>
<keyword id="KW-0411">Iron-sulfur</keyword>
<keyword id="KW-0460">Magnesium</keyword>
<keyword id="KW-0472">Membrane</keyword>
<keyword id="KW-0479">Metal-binding</keyword>
<keyword id="KW-0560">Oxidoreductase</keyword>
<keyword id="KW-0602">Photosynthesis</keyword>
<keyword id="KW-0603">Photosystem I</keyword>
<keyword id="KW-0934">Plastid</keyword>
<keyword id="KW-0793">Thylakoid</keyword>
<keyword id="KW-0812">Transmembrane</keyword>
<keyword id="KW-1133">Transmembrane helix</keyword>
<keyword id="KW-0813">Transport</keyword>
<comment type="function">
    <text evidence="1">PsaA and PsaB bind P700, the primary electron donor of photosystem I (PSI), as well as the electron acceptors A0, A1 and FX. PSI is a plastocyanin-ferredoxin oxidoreductase, converting photonic excitation into a charge separation, which transfers an electron from the donor P700 chlorophyll pair to the spectroscopically characterized acceptors A0, A1, FX, FA and FB in turn. Oxidized P700 is reduced on the lumenal side of the thylakoid membrane by plastocyanin.</text>
</comment>
<comment type="catalytic activity">
    <reaction evidence="1">
        <text>reduced [plastocyanin] + hnu + oxidized [2Fe-2S]-[ferredoxin] = oxidized [plastocyanin] + reduced [2Fe-2S]-[ferredoxin]</text>
        <dbReference type="Rhea" id="RHEA:30407"/>
        <dbReference type="Rhea" id="RHEA-COMP:10000"/>
        <dbReference type="Rhea" id="RHEA-COMP:10001"/>
        <dbReference type="Rhea" id="RHEA-COMP:10039"/>
        <dbReference type="Rhea" id="RHEA-COMP:10040"/>
        <dbReference type="ChEBI" id="CHEBI:29036"/>
        <dbReference type="ChEBI" id="CHEBI:30212"/>
        <dbReference type="ChEBI" id="CHEBI:33737"/>
        <dbReference type="ChEBI" id="CHEBI:33738"/>
        <dbReference type="ChEBI" id="CHEBI:49552"/>
        <dbReference type="EC" id="1.97.1.12"/>
    </reaction>
</comment>
<comment type="cofactor">
    <text evidence="1">P700 is a chlorophyll a/chlorophyll a' dimer, A0 is one or more chlorophyll a, A1 is one or both phylloquinones and FX is a shared 4Fe-4S iron-sulfur center.</text>
</comment>
<comment type="subunit">
    <text evidence="1">The PsaA/B heterodimer binds the P700 chlorophyll special pair and subsequent electron acceptors. PSI consists of a core antenna complex that captures photons, and an electron transfer chain that converts photonic excitation into a charge separation. The eukaryotic PSI reaction center is composed of at least 11 subunits.</text>
</comment>
<comment type="subcellular location">
    <subcellularLocation>
        <location evidence="1">Plastid</location>
        <location evidence="1">Chloroplast thylakoid membrane</location>
        <topology evidence="1">Multi-pass membrane protein</topology>
    </subcellularLocation>
</comment>
<comment type="similarity">
    <text evidence="1">Belongs to the PsaA/PsaB family.</text>
</comment>
<protein>
    <recommendedName>
        <fullName evidence="1">Photosystem I P700 chlorophyll a apoprotein A2</fullName>
        <ecNumber evidence="1">1.97.1.12</ecNumber>
    </recommendedName>
    <alternativeName>
        <fullName evidence="1">PSI-B</fullName>
    </alternativeName>
    <alternativeName>
        <fullName evidence="1">PsaB</fullName>
    </alternativeName>
</protein>
<evidence type="ECO:0000255" key="1">
    <source>
        <dbReference type="HAMAP-Rule" id="MF_00482"/>
    </source>
</evidence>
<evidence type="ECO:0007829" key="2">
    <source>
        <dbReference type="PDB" id="7EW6"/>
    </source>
</evidence>
<sequence length="734" mass="82615">MELRFPRFSQGLAQDPTTRRIWFGIATAHDFESHDDITEERLYQNIFASHFGQLAIIFLWTSGNLFHVAWQGNFESWIQDPLHVRPIAHAIWDPHFGQPAVEAFTRGGAAGPVNIAYSGVYQWWYTIGLRTNEDLYTGALFLLFLSTLSLIASWLHLQPKWKPSLSWFKNAESRLNHHLSGLFGVSSLAWTGHLVHVAIPASRGEYVRWNNFLDVLPYPQGLGPLLTGQWNLYAQNPDSSNHLFGTAQGAGTAILTLLGGFHPQTQSLWLTDMAHHHLAIAFIFLIAGHMYRTNFGIGHSIKDLLEAHTPPGGRLGRGHKGLYDTINNSIHFQLGLALASLGVITSLVAQHMYSLPPYAFIAQDFTTQAALYTHHQYIAGFIMTGAFAHGAIFFIRDYNPEQNEDNVLARMLDHKEAIISHLSWASLFLGFHTLGLYVHNDVMLAFGTPEKQILIEPIFAQWIQSAHGKTTYGFDILLSSTNGPAFNAGRSLWLPGWLNAVNENSNSLFLTIGPGDFLVHHAIALGLHTTTLILVKGALDARGSKLMPDKKDFGYSFPCDGPGRGGTCDISAWDAFYLAVFWMLNTIGWVTFYWHWKHITLWQGNVSQFNESSTYLMGWLRDYLWLNSSQLINGYNPFGMNSLSVWAWMFLFGHLVWATGFMFLISWRGYWQELIETLAWAHERTPLANLIRWRDKPVALSIVQARLVGLAHFSVGYIFTYAAFLIASTSGKFG</sequence>
<organism>
    <name type="scientific">Hordeum vulgare</name>
    <name type="common">Barley</name>
    <dbReference type="NCBI Taxonomy" id="4513"/>
    <lineage>
        <taxon>Eukaryota</taxon>
        <taxon>Viridiplantae</taxon>
        <taxon>Streptophyta</taxon>
        <taxon>Embryophyta</taxon>
        <taxon>Tracheophyta</taxon>
        <taxon>Spermatophyta</taxon>
        <taxon>Magnoliopsida</taxon>
        <taxon>Liliopsida</taxon>
        <taxon>Poales</taxon>
        <taxon>Poaceae</taxon>
        <taxon>BOP clade</taxon>
        <taxon>Pooideae</taxon>
        <taxon>Triticodae</taxon>
        <taxon>Triticeae</taxon>
        <taxon>Hordeinae</taxon>
        <taxon>Hordeum</taxon>
    </lineage>
</organism>
<gene>
    <name evidence="1" type="primary">psaB</name>
</gene>
<accession>A1E9J0</accession>
<geneLocation type="chloroplast"/>
<feature type="chain" id="PRO_0000300046" description="Photosystem I P700 chlorophyll a apoprotein A2">
    <location>
        <begin position="1"/>
        <end position="734"/>
    </location>
</feature>
<feature type="transmembrane region" description="Helical; Name=I" evidence="1">
    <location>
        <begin position="46"/>
        <end position="69"/>
    </location>
</feature>
<feature type="transmembrane region" description="Helical; Name=II" evidence="1">
    <location>
        <begin position="135"/>
        <end position="158"/>
    </location>
</feature>
<feature type="transmembrane region" description="Helical; Name=III" evidence="1">
    <location>
        <begin position="175"/>
        <end position="199"/>
    </location>
</feature>
<feature type="transmembrane region" description="Helical; Name=IV" evidence="1">
    <location>
        <begin position="273"/>
        <end position="291"/>
    </location>
</feature>
<feature type="transmembrane region" description="Helical; Name=V" evidence="1">
    <location>
        <begin position="330"/>
        <end position="353"/>
    </location>
</feature>
<feature type="transmembrane region" description="Helical; Name=VI" evidence="1">
    <location>
        <begin position="369"/>
        <end position="395"/>
    </location>
</feature>
<feature type="transmembrane region" description="Helical; Name=VII" evidence="1">
    <location>
        <begin position="417"/>
        <end position="439"/>
    </location>
</feature>
<feature type="transmembrane region" description="Helical; Name=VIII" evidence="1">
    <location>
        <begin position="517"/>
        <end position="535"/>
    </location>
</feature>
<feature type="transmembrane region" description="Helical; Name=IX" evidence="1">
    <location>
        <begin position="575"/>
        <end position="596"/>
    </location>
</feature>
<feature type="transmembrane region" description="Helical; Name=X" evidence="1">
    <location>
        <begin position="643"/>
        <end position="665"/>
    </location>
</feature>
<feature type="transmembrane region" description="Helical; Name=XI" evidence="1">
    <location>
        <begin position="707"/>
        <end position="727"/>
    </location>
</feature>
<feature type="binding site" evidence="1">
    <location>
        <position position="559"/>
    </location>
    <ligand>
        <name>[4Fe-4S] cluster</name>
        <dbReference type="ChEBI" id="CHEBI:49883"/>
        <note>ligand shared between dimeric partners</note>
    </ligand>
</feature>
<feature type="binding site" evidence="1">
    <location>
        <position position="568"/>
    </location>
    <ligand>
        <name>[4Fe-4S] cluster</name>
        <dbReference type="ChEBI" id="CHEBI:49883"/>
        <note>ligand shared between dimeric partners</note>
    </ligand>
</feature>
<feature type="binding site" description="axial binding residue" evidence="1">
    <location>
        <position position="654"/>
    </location>
    <ligand>
        <name>chlorophyll a</name>
        <dbReference type="ChEBI" id="CHEBI:58416"/>
        <label>B1</label>
    </ligand>
    <ligandPart>
        <name>Mg</name>
        <dbReference type="ChEBI" id="CHEBI:25107"/>
    </ligandPart>
</feature>
<feature type="binding site" description="axial binding residue" evidence="1">
    <location>
        <position position="662"/>
    </location>
    <ligand>
        <name>chlorophyll a</name>
        <dbReference type="ChEBI" id="CHEBI:58416"/>
        <label>B3</label>
    </ligand>
    <ligandPart>
        <name>Mg</name>
        <dbReference type="ChEBI" id="CHEBI:25107"/>
    </ligandPart>
</feature>
<feature type="binding site" evidence="1">
    <location>
        <position position="670"/>
    </location>
    <ligand>
        <name>chlorophyll a</name>
        <dbReference type="ChEBI" id="CHEBI:58416"/>
        <label>B3</label>
    </ligand>
</feature>
<feature type="binding site" evidence="1">
    <location>
        <position position="671"/>
    </location>
    <ligand>
        <name>phylloquinone</name>
        <dbReference type="ChEBI" id="CHEBI:18067"/>
        <label>B</label>
    </ligand>
</feature>
<feature type="helix" evidence="2">
    <location>
        <begin position="10"/>
        <end position="13"/>
    </location>
</feature>
<feature type="helix" evidence="2">
    <location>
        <begin position="19"/>
        <end position="26"/>
    </location>
</feature>
<feature type="helix" evidence="2">
    <location>
        <begin position="39"/>
        <end position="68"/>
    </location>
</feature>
<feature type="helix" evidence="2">
    <location>
        <begin position="74"/>
        <end position="79"/>
    </location>
</feature>
<feature type="strand" evidence="2">
    <location>
        <begin position="87"/>
        <end position="90"/>
    </location>
</feature>
<feature type="helix" evidence="2">
    <location>
        <begin position="98"/>
        <end position="103"/>
    </location>
</feature>
<feature type="strand" evidence="2">
    <location>
        <begin position="113"/>
        <end position="115"/>
    </location>
</feature>
<feature type="helix" evidence="2">
    <location>
        <begin position="120"/>
        <end position="126"/>
    </location>
</feature>
<feature type="helix" evidence="2">
    <location>
        <begin position="133"/>
        <end position="155"/>
    </location>
</feature>
<feature type="helix" evidence="2">
    <location>
        <begin position="165"/>
        <end position="168"/>
    </location>
</feature>
<feature type="helix" evidence="2">
    <location>
        <begin position="171"/>
        <end position="180"/>
    </location>
</feature>
<feature type="helix" evidence="2">
    <location>
        <begin position="183"/>
        <end position="196"/>
    </location>
</feature>
<feature type="helix" evidence="2">
    <location>
        <begin position="198"/>
        <end position="201"/>
    </location>
</feature>
<feature type="turn" evidence="2">
    <location>
        <begin position="202"/>
        <end position="204"/>
    </location>
</feature>
<feature type="turn" evidence="2">
    <location>
        <begin position="209"/>
        <end position="214"/>
    </location>
</feature>
<feature type="helix" evidence="2">
    <location>
        <begin position="224"/>
        <end position="227"/>
    </location>
</feature>
<feature type="helix" evidence="2">
    <location>
        <begin position="230"/>
        <end position="232"/>
    </location>
</feature>
<feature type="turn" evidence="2">
    <location>
        <begin position="263"/>
        <end position="266"/>
    </location>
</feature>
<feature type="helix" evidence="2">
    <location>
        <begin position="270"/>
        <end position="287"/>
    </location>
</feature>
<feature type="strand" evidence="2">
    <location>
        <begin position="293"/>
        <end position="296"/>
    </location>
</feature>
<feature type="helix" evidence="2">
    <location>
        <begin position="301"/>
        <end position="307"/>
    </location>
</feature>
<feature type="turn" evidence="2">
    <location>
        <begin position="314"/>
        <end position="321"/>
    </location>
</feature>
<feature type="helix" evidence="2">
    <location>
        <begin position="322"/>
        <end position="328"/>
    </location>
</feature>
<feature type="helix" evidence="2">
    <location>
        <begin position="330"/>
        <end position="352"/>
    </location>
</feature>
<feature type="helix" evidence="2">
    <location>
        <begin position="365"/>
        <end position="396"/>
    </location>
</feature>
<feature type="turn" evidence="2">
    <location>
        <begin position="400"/>
        <end position="403"/>
    </location>
</feature>
<feature type="strand" evidence="2">
    <location>
        <begin position="404"/>
        <end position="406"/>
    </location>
</feature>
<feature type="helix" evidence="2">
    <location>
        <begin position="407"/>
        <end position="410"/>
    </location>
</feature>
<feature type="turn" evidence="2">
    <location>
        <begin position="411"/>
        <end position="413"/>
    </location>
</feature>
<feature type="helix" evidence="2">
    <location>
        <begin position="415"/>
        <end position="445"/>
    </location>
</feature>
<feature type="helix" evidence="2">
    <location>
        <begin position="458"/>
        <end position="466"/>
    </location>
</feature>
<feature type="turn" evidence="2">
    <location>
        <begin position="477"/>
        <end position="479"/>
    </location>
</feature>
<feature type="strand" evidence="2">
    <location>
        <begin position="480"/>
        <end position="482"/>
    </location>
</feature>
<feature type="helix" evidence="2">
    <location>
        <begin position="484"/>
        <end position="487"/>
    </location>
</feature>
<feature type="turn" evidence="2">
    <location>
        <begin position="488"/>
        <end position="493"/>
    </location>
</feature>
<feature type="helix" evidence="2">
    <location>
        <begin position="494"/>
        <end position="502"/>
    </location>
</feature>
<feature type="strand" evidence="2">
    <location>
        <begin position="504"/>
        <end position="506"/>
    </location>
</feature>
<feature type="helix" evidence="2">
    <location>
        <begin position="514"/>
        <end position="539"/>
    </location>
</feature>
<feature type="helix" evidence="2">
    <location>
        <begin position="550"/>
        <end position="552"/>
    </location>
</feature>
<feature type="helix" evidence="2">
    <location>
        <begin position="563"/>
        <end position="565"/>
    </location>
</feature>
<feature type="helix" evidence="2">
    <location>
        <begin position="572"/>
        <end position="602"/>
    </location>
</feature>
<feature type="helix" evidence="2">
    <location>
        <begin position="606"/>
        <end position="612"/>
    </location>
</feature>
<feature type="helix" evidence="2">
    <location>
        <begin position="616"/>
        <end position="622"/>
    </location>
</feature>
<feature type="helix" evidence="2">
    <location>
        <begin position="624"/>
        <end position="627"/>
    </location>
</feature>
<feature type="turn" evidence="2">
    <location>
        <begin position="628"/>
        <end position="631"/>
    </location>
</feature>
<feature type="helix" evidence="2">
    <location>
        <begin position="632"/>
        <end position="634"/>
    </location>
</feature>
<feature type="helix" evidence="2">
    <location>
        <begin position="644"/>
        <end position="665"/>
    </location>
</feature>
<feature type="helix" evidence="2">
    <location>
        <begin position="668"/>
        <end position="684"/>
    </location>
</feature>
<feature type="turn" evidence="2">
    <location>
        <begin position="686"/>
        <end position="688"/>
    </location>
</feature>
<feature type="strand" evidence="2">
    <location>
        <begin position="694"/>
        <end position="696"/>
    </location>
</feature>
<feature type="helix" evidence="2">
    <location>
        <begin position="702"/>
        <end position="732"/>
    </location>
</feature>
<reference key="1">
    <citation type="journal article" date="2007" name="Theor. Appl. Genet.">
        <title>Complete chloroplast genome sequences of Hordeum vulgare, Sorghum bicolor and Agrostis stolonifera, and comparative analyses with other grass genomes.</title>
        <authorList>
            <person name="Saski C."/>
            <person name="Lee S.-B."/>
            <person name="Fjellheim S."/>
            <person name="Guda C."/>
            <person name="Jansen R.K."/>
            <person name="Luo H."/>
            <person name="Tomkins J."/>
            <person name="Rognli O.A."/>
            <person name="Daniell H."/>
            <person name="Clarke J.L."/>
        </authorList>
    </citation>
    <scope>NUCLEOTIDE SEQUENCE [LARGE SCALE GENOMIC DNA]</scope>
    <source>
        <strain>cv. Morex</strain>
    </source>
</reference>
<proteinExistence type="evidence at protein level"/>
<dbReference type="EC" id="1.97.1.12" evidence="1"/>
<dbReference type="EMBL" id="EF115541">
    <property type="protein sequence ID" value="ABK79412.1"/>
    <property type="molecule type" value="Genomic_DNA"/>
</dbReference>
<dbReference type="RefSeq" id="YP_010144424.1">
    <property type="nucleotide sequence ID" value="NC_056985.1"/>
</dbReference>
<dbReference type="RefSeq" id="YP_874652.1">
    <property type="nucleotide sequence ID" value="NC_008590.1"/>
</dbReference>
<dbReference type="PDB" id="7EW6">
    <property type="method" value="EM"/>
    <property type="resolution" value="3.40 A"/>
    <property type="chains" value="B=1-734"/>
</dbReference>
<dbReference type="PDB" id="7EWK">
    <property type="method" value="EM"/>
    <property type="resolution" value="3.88 A"/>
    <property type="chains" value="B=2-734"/>
</dbReference>
<dbReference type="PDBsum" id="7EW6"/>
<dbReference type="PDBsum" id="7EWK"/>
<dbReference type="SMR" id="A1E9J0"/>
<dbReference type="GeneID" id="4525131"/>
<dbReference type="GeneID" id="67140684"/>
<dbReference type="OMA" id="NAYGMNN"/>
<dbReference type="GO" id="GO:0009535">
    <property type="term" value="C:chloroplast thylakoid membrane"/>
    <property type="evidence" value="ECO:0007669"/>
    <property type="project" value="UniProtKB-SubCell"/>
</dbReference>
<dbReference type="GO" id="GO:0009522">
    <property type="term" value="C:photosystem I"/>
    <property type="evidence" value="ECO:0007669"/>
    <property type="project" value="UniProtKB-KW"/>
</dbReference>
<dbReference type="GO" id="GO:0051539">
    <property type="term" value="F:4 iron, 4 sulfur cluster binding"/>
    <property type="evidence" value="ECO:0007669"/>
    <property type="project" value="UniProtKB-KW"/>
</dbReference>
<dbReference type="GO" id="GO:0016168">
    <property type="term" value="F:chlorophyll binding"/>
    <property type="evidence" value="ECO:0007669"/>
    <property type="project" value="UniProtKB-KW"/>
</dbReference>
<dbReference type="GO" id="GO:0009055">
    <property type="term" value="F:electron transfer activity"/>
    <property type="evidence" value="ECO:0007669"/>
    <property type="project" value="UniProtKB-UniRule"/>
</dbReference>
<dbReference type="GO" id="GO:0000287">
    <property type="term" value="F:magnesium ion binding"/>
    <property type="evidence" value="ECO:0007669"/>
    <property type="project" value="UniProtKB-UniRule"/>
</dbReference>
<dbReference type="GO" id="GO:0016491">
    <property type="term" value="F:oxidoreductase activity"/>
    <property type="evidence" value="ECO:0007669"/>
    <property type="project" value="UniProtKB-KW"/>
</dbReference>
<dbReference type="GO" id="GO:0015979">
    <property type="term" value="P:photosynthesis"/>
    <property type="evidence" value="ECO:0007669"/>
    <property type="project" value="UniProtKB-UniRule"/>
</dbReference>
<dbReference type="FunFam" id="1.20.1130.10:FF:000001">
    <property type="entry name" value="Photosystem I P700 chlorophyll a apoprotein A2"/>
    <property type="match status" value="1"/>
</dbReference>
<dbReference type="Gene3D" id="1.20.1130.10">
    <property type="entry name" value="Photosystem I PsaA/PsaB"/>
    <property type="match status" value="1"/>
</dbReference>
<dbReference type="HAMAP" id="MF_00482">
    <property type="entry name" value="PSI_PsaB"/>
    <property type="match status" value="1"/>
</dbReference>
<dbReference type="InterPro" id="IPR001280">
    <property type="entry name" value="PSI_PsaA/B"/>
</dbReference>
<dbReference type="InterPro" id="IPR020586">
    <property type="entry name" value="PSI_PsaA/B_CS"/>
</dbReference>
<dbReference type="InterPro" id="IPR036408">
    <property type="entry name" value="PSI_PsaA/B_sf"/>
</dbReference>
<dbReference type="InterPro" id="IPR006244">
    <property type="entry name" value="PSI_PsaB"/>
</dbReference>
<dbReference type="NCBIfam" id="TIGR01336">
    <property type="entry name" value="psaB"/>
    <property type="match status" value="1"/>
</dbReference>
<dbReference type="PANTHER" id="PTHR30128">
    <property type="entry name" value="OUTER MEMBRANE PROTEIN, OMPA-RELATED"/>
    <property type="match status" value="1"/>
</dbReference>
<dbReference type="PANTHER" id="PTHR30128:SF19">
    <property type="entry name" value="PHOTOSYSTEM I P700 CHLOROPHYLL A APOPROTEIN A1-RELATED"/>
    <property type="match status" value="1"/>
</dbReference>
<dbReference type="Pfam" id="PF00223">
    <property type="entry name" value="PsaA_PsaB"/>
    <property type="match status" value="1"/>
</dbReference>
<dbReference type="PIRSF" id="PIRSF002905">
    <property type="entry name" value="PSI_A"/>
    <property type="match status" value="1"/>
</dbReference>
<dbReference type="PRINTS" id="PR00257">
    <property type="entry name" value="PHOTSYSPSAAB"/>
</dbReference>
<dbReference type="SUPFAM" id="SSF81558">
    <property type="entry name" value="Photosystem I subunits PsaA/PsaB"/>
    <property type="match status" value="1"/>
</dbReference>
<dbReference type="PROSITE" id="PS00419">
    <property type="entry name" value="PHOTOSYSTEM_I_PSAAB"/>
    <property type="match status" value="1"/>
</dbReference>
<name>PSAB_HORVU</name>